<comment type="function">
    <text evidence="3">Catalyzes the synthesis of dihydrouridine, a modified base found in the D-loop of most tRNAs. Specifically modifies U16 and U17 in cytoplasmic tRNAs. Affects the level of some mature tRNA and thereby the total cellular translation.</text>
</comment>
<comment type="catalytic activity">
    <reaction evidence="3">
        <text>5,6-dihydrouridine(16) in tRNA + NADP(+) = uridine(16) in tRNA + NADPH + H(+)</text>
        <dbReference type="Rhea" id="RHEA:53376"/>
        <dbReference type="Rhea" id="RHEA-COMP:13543"/>
        <dbReference type="Rhea" id="RHEA-COMP:13544"/>
        <dbReference type="ChEBI" id="CHEBI:15378"/>
        <dbReference type="ChEBI" id="CHEBI:57783"/>
        <dbReference type="ChEBI" id="CHEBI:58349"/>
        <dbReference type="ChEBI" id="CHEBI:65315"/>
        <dbReference type="ChEBI" id="CHEBI:74443"/>
        <dbReference type="EC" id="1.3.1.88"/>
    </reaction>
    <physiologicalReaction direction="right-to-left" evidence="3">
        <dbReference type="Rhea" id="RHEA:53378"/>
    </physiologicalReaction>
</comment>
<comment type="catalytic activity">
    <reaction evidence="3">
        <text>5,6-dihydrouridine(16) in tRNA + NAD(+) = uridine(16) in tRNA + NADH + H(+)</text>
        <dbReference type="Rhea" id="RHEA:53380"/>
        <dbReference type="Rhea" id="RHEA-COMP:13543"/>
        <dbReference type="Rhea" id="RHEA-COMP:13544"/>
        <dbReference type="ChEBI" id="CHEBI:15378"/>
        <dbReference type="ChEBI" id="CHEBI:57540"/>
        <dbReference type="ChEBI" id="CHEBI:57945"/>
        <dbReference type="ChEBI" id="CHEBI:65315"/>
        <dbReference type="ChEBI" id="CHEBI:74443"/>
        <dbReference type="EC" id="1.3.1.88"/>
    </reaction>
    <physiologicalReaction direction="right-to-left" evidence="3">
        <dbReference type="Rhea" id="RHEA:53382"/>
    </physiologicalReaction>
</comment>
<comment type="catalytic activity">
    <reaction evidence="1">
        <text>5,6-dihydrouridine(17) in tRNA + NAD(+) = uridine(17) in tRNA + NADH + H(+)</text>
        <dbReference type="Rhea" id="RHEA:53372"/>
        <dbReference type="Rhea" id="RHEA-COMP:13541"/>
        <dbReference type="Rhea" id="RHEA-COMP:13542"/>
        <dbReference type="ChEBI" id="CHEBI:15378"/>
        <dbReference type="ChEBI" id="CHEBI:57540"/>
        <dbReference type="ChEBI" id="CHEBI:57945"/>
        <dbReference type="ChEBI" id="CHEBI:65315"/>
        <dbReference type="ChEBI" id="CHEBI:74443"/>
        <dbReference type="EC" id="1.3.1.88"/>
    </reaction>
    <physiologicalReaction direction="right-to-left" evidence="1">
        <dbReference type="Rhea" id="RHEA:53374"/>
    </physiologicalReaction>
</comment>
<comment type="catalytic activity">
    <reaction evidence="1">
        <text>5,6-dihydrouridine(17) in tRNA + NADP(+) = uridine(17) in tRNA + NADPH + H(+)</text>
        <dbReference type="Rhea" id="RHEA:53368"/>
        <dbReference type="Rhea" id="RHEA-COMP:13541"/>
        <dbReference type="Rhea" id="RHEA-COMP:13542"/>
        <dbReference type="ChEBI" id="CHEBI:15378"/>
        <dbReference type="ChEBI" id="CHEBI:57783"/>
        <dbReference type="ChEBI" id="CHEBI:58349"/>
        <dbReference type="ChEBI" id="CHEBI:65315"/>
        <dbReference type="ChEBI" id="CHEBI:74443"/>
        <dbReference type="EC" id="1.3.1.88"/>
    </reaction>
    <physiologicalReaction direction="right-to-left" evidence="1">
        <dbReference type="Rhea" id="RHEA:53370"/>
    </physiologicalReaction>
</comment>
<comment type="cofactor">
    <cofactor evidence="2">
        <name>FMN</name>
        <dbReference type="ChEBI" id="CHEBI:58210"/>
    </cofactor>
</comment>
<comment type="subcellular location">
    <subcellularLocation>
        <location evidence="3">Cytoplasm</location>
    </subcellularLocation>
    <subcellularLocation>
        <location evidence="3">Nucleus</location>
    </subcellularLocation>
    <text evidence="3">Predominantly cytoplasmic localization with a minor population localized to the nucleus.</text>
</comment>
<comment type="similarity">
    <text evidence="5">Belongs to the Dus family. Dus1 subfamily.</text>
</comment>
<comment type="sequence caution" evidence="5">
    <conflict type="erroneous initiation">
        <sequence resource="EMBL-CDS" id="AAH19480"/>
    </conflict>
</comment>
<comment type="sequence caution" evidence="5">
    <conflict type="erroneous initiation">
        <sequence resource="EMBL-CDS" id="BAB23138"/>
    </conflict>
</comment>
<dbReference type="EC" id="1.3.1.88" evidence="3"/>
<dbReference type="EMBL" id="AK004041">
    <property type="protein sequence ID" value="BAB23138.1"/>
    <property type="status" value="ALT_INIT"/>
    <property type="molecule type" value="mRNA"/>
</dbReference>
<dbReference type="EMBL" id="AK088243">
    <property type="protein sequence ID" value="BAC40231.1"/>
    <property type="molecule type" value="mRNA"/>
</dbReference>
<dbReference type="EMBL" id="BC019480">
    <property type="protein sequence ID" value="AAH19480.1"/>
    <property type="status" value="ALT_INIT"/>
    <property type="molecule type" value="mRNA"/>
</dbReference>
<dbReference type="CCDS" id="CCDS49012.1"/>
<dbReference type="RefSeq" id="NP_001404854.1">
    <property type="nucleotide sequence ID" value="NM_001417925.1"/>
</dbReference>
<dbReference type="RefSeq" id="NP_001404856.1">
    <property type="nucleotide sequence ID" value="NM_001417927.1"/>
</dbReference>
<dbReference type="RefSeq" id="NP_001404857.1">
    <property type="nucleotide sequence ID" value="NM_001417928.1"/>
</dbReference>
<dbReference type="RefSeq" id="NP_081100.2">
    <property type="nucleotide sequence ID" value="NM_026824.4"/>
</dbReference>
<dbReference type="RefSeq" id="XP_006534140.1">
    <property type="nucleotide sequence ID" value="XM_006534077.3"/>
</dbReference>
<dbReference type="RefSeq" id="XP_011247515.1">
    <property type="nucleotide sequence ID" value="XM_011249213.2"/>
</dbReference>
<dbReference type="RefSeq" id="XP_011247516.1">
    <property type="nucleotide sequence ID" value="XM_011249214.2"/>
</dbReference>
<dbReference type="SMR" id="Q8C2P3"/>
<dbReference type="FunCoup" id="Q8C2P3">
    <property type="interactions" value="1685"/>
</dbReference>
<dbReference type="STRING" id="10090.ENSMUSP00000132516"/>
<dbReference type="GlyGen" id="Q8C2P3">
    <property type="glycosylation" value="1 site"/>
</dbReference>
<dbReference type="PhosphoSitePlus" id="Q8C2P3"/>
<dbReference type="PaxDb" id="10090-ENSMUSP00000026151"/>
<dbReference type="ProteomicsDB" id="277529"/>
<dbReference type="Pumba" id="Q8C2P3"/>
<dbReference type="Antibodypedia" id="19877">
    <property type="antibodies" value="119 antibodies from 23 providers"/>
</dbReference>
<dbReference type="Ensembl" id="ENSMUST00000167023.8">
    <property type="protein sequence ID" value="ENSMUSP00000132516.2"/>
    <property type="gene ID" value="ENSMUSG00000025155.16"/>
</dbReference>
<dbReference type="GeneID" id="68730"/>
<dbReference type="KEGG" id="mmu:68730"/>
<dbReference type="UCSC" id="uc007mur.1">
    <property type="organism name" value="mouse"/>
</dbReference>
<dbReference type="AGR" id="MGI:1915980"/>
<dbReference type="CTD" id="64118"/>
<dbReference type="MGI" id="MGI:1915980">
    <property type="gene designation" value="Dus1l"/>
</dbReference>
<dbReference type="VEuPathDB" id="HostDB:ENSMUSG00000025155"/>
<dbReference type="eggNOG" id="KOG2335">
    <property type="taxonomic scope" value="Eukaryota"/>
</dbReference>
<dbReference type="GeneTree" id="ENSGT00550000075089"/>
<dbReference type="HOGENOM" id="CLU_013299_5_1_1"/>
<dbReference type="InParanoid" id="Q8C2P3"/>
<dbReference type="OMA" id="ISPPVWQ"/>
<dbReference type="OrthoDB" id="272303at2759"/>
<dbReference type="BioGRID-ORCS" id="68730">
    <property type="hits" value="2 hits in 80 CRISPR screens"/>
</dbReference>
<dbReference type="ChiTaRS" id="Dus1l">
    <property type="organism name" value="mouse"/>
</dbReference>
<dbReference type="PRO" id="PR:Q8C2P3"/>
<dbReference type="Proteomes" id="UP000000589">
    <property type="component" value="Chromosome 11"/>
</dbReference>
<dbReference type="RNAct" id="Q8C2P3">
    <property type="molecule type" value="protein"/>
</dbReference>
<dbReference type="Bgee" id="ENSMUSG00000025155">
    <property type="expression patterns" value="Expressed in paneth cell and 282 other cell types or tissues"/>
</dbReference>
<dbReference type="ExpressionAtlas" id="Q8C2P3">
    <property type="expression patterns" value="baseline and differential"/>
</dbReference>
<dbReference type="GO" id="GO:0005737">
    <property type="term" value="C:cytoplasm"/>
    <property type="evidence" value="ECO:0000250"/>
    <property type="project" value="UniProtKB"/>
</dbReference>
<dbReference type="GO" id="GO:0005634">
    <property type="term" value="C:nucleus"/>
    <property type="evidence" value="ECO:0000250"/>
    <property type="project" value="UniProtKB"/>
</dbReference>
<dbReference type="GO" id="GO:0050660">
    <property type="term" value="F:flavin adenine dinucleotide binding"/>
    <property type="evidence" value="ECO:0007669"/>
    <property type="project" value="InterPro"/>
</dbReference>
<dbReference type="GO" id="GO:0102262">
    <property type="term" value="F:tRNA-dihydrouridine16 synthase activity"/>
    <property type="evidence" value="ECO:0000250"/>
    <property type="project" value="UniProtKB"/>
</dbReference>
<dbReference type="GO" id="GO:0102263">
    <property type="term" value="F:tRNA-dihydrouridine17 synthase activity"/>
    <property type="evidence" value="ECO:0000250"/>
    <property type="project" value="UniProtKB"/>
</dbReference>
<dbReference type="GO" id="GO:0002943">
    <property type="term" value="P:tRNA dihydrouridine synthesis"/>
    <property type="evidence" value="ECO:0000250"/>
    <property type="project" value="UniProtKB"/>
</dbReference>
<dbReference type="CDD" id="cd02801">
    <property type="entry name" value="DUS_like_FMN"/>
    <property type="match status" value="1"/>
</dbReference>
<dbReference type="FunFam" id="3.20.20.70:FF:000081">
    <property type="entry name" value="Dihydrouridine synthase 1 like"/>
    <property type="match status" value="1"/>
</dbReference>
<dbReference type="Gene3D" id="3.20.20.70">
    <property type="entry name" value="Aldolase class I"/>
    <property type="match status" value="1"/>
</dbReference>
<dbReference type="InterPro" id="IPR013785">
    <property type="entry name" value="Aldolase_TIM"/>
</dbReference>
<dbReference type="InterPro" id="IPR035587">
    <property type="entry name" value="DUS-like_FMN-bd"/>
</dbReference>
<dbReference type="InterPro" id="IPR018517">
    <property type="entry name" value="tRNA_hU_synthase_CS"/>
</dbReference>
<dbReference type="PANTHER" id="PTHR11082">
    <property type="entry name" value="TRNA-DIHYDROURIDINE SYNTHASE"/>
    <property type="match status" value="1"/>
</dbReference>
<dbReference type="PANTHER" id="PTHR11082:SF5">
    <property type="entry name" value="TRNA-DIHYDROURIDINE(16_17) SYNTHASE [NAD(P)(+)]-LIKE"/>
    <property type="match status" value="1"/>
</dbReference>
<dbReference type="Pfam" id="PF01207">
    <property type="entry name" value="Dus"/>
    <property type="match status" value="1"/>
</dbReference>
<dbReference type="SUPFAM" id="SSF51395">
    <property type="entry name" value="FMN-linked oxidoreductases"/>
    <property type="match status" value="1"/>
</dbReference>
<dbReference type="PROSITE" id="PS01136">
    <property type="entry name" value="UPF0034"/>
    <property type="match status" value="1"/>
</dbReference>
<keyword id="KW-0963">Cytoplasm</keyword>
<keyword id="KW-0285">Flavoprotein</keyword>
<keyword id="KW-0288">FMN</keyword>
<keyword id="KW-0520">NAD</keyword>
<keyword id="KW-0521">NADP</keyword>
<keyword id="KW-0539">Nucleus</keyword>
<keyword id="KW-0560">Oxidoreductase</keyword>
<keyword id="KW-1185">Reference proteome</keyword>
<keyword id="KW-0819">tRNA processing</keyword>
<proteinExistence type="evidence at transcript level"/>
<gene>
    <name type="primary">Dus1l</name>
</gene>
<protein>
    <recommendedName>
        <fullName>tRNA-dihydrouridine(16/17) synthase [NAD(P)(+)]-like</fullName>
        <ecNumber evidence="3">1.3.1.88</ecNumber>
    </recommendedName>
    <alternativeName>
        <fullName>tRNA-dihydrouridine synthase 1-like</fullName>
    </alternativeName>
</protein>
<reference key="1">
    <citation type="journal article" date="2005" name="Science">
        <title>The transcriptional landscape of the mammalian genome.</title>
        <authorList>
            <person name="Carninci P."/>
            <person name="Kasukawa T."/>
            <person name="Katayama S."/>
            <person name="Gough J."/>
            <person name="Frith M.C."/>
            <person name="Maeda N."/>
            <person name="Oyama R."/>
            <person name="Ravasi T."/>
            <person name="Lenhard B."/>
            <person name="Wells C."/>
            <person name="Kodzius R."/>
            <person name="Shimokawa K."/>
            <person name="Bajic V.B."/>
            <person name="Brenner S.E."/>
            <person name="Batalov S."/>
            <person name="Forrest A.R."/>
            <person name="Zavolan M."/>
            <person name="Davis M.J."/>
            <person name="Wilming L.G."/>
            <person name="Aidinis V."/>
            <person name="Allen J.E."/>
            <person name="Ambesi-Impiombato A."/>
            <person name="Apweiler R."/>
            <person name="Aturaliya R.N."/>
            <person name="Bailey T.L."/>
            <person name="Bansal M."/>
            <person name="Baxter L."/>
            <person name="Beisel K.W."/>
            <person name="Bersano T."/>
            <person name="Bono H."/>
            <person name="Chalk A.M."/>
            <person name="Chiu K.P."/>
            <person name="Choudhary V."/>
            <person name="Christoffels A."/>
            <person name="Clutterbuck D.R."/>
            <person name="Crowe M.L."/>
            <person name="Dalla E."/>
            <person name="Dalrymple B.P."/>
            <person name="de Bono B."/>
            <person name="Della Gatta G."/>
            <person name="di Bernardo D."/>
            <person name="Down T."/>
            <person name="Engstrom P."/>
            <person name="Fagiolini M."/>
            <person name="Faulkner G."/>
            <person name="Fletcher C.F."/>
            <person name="Fukushima T."/>
            <person name="Furuno M."/>
            <person name="Futaki S."/>
            <person name="Gariboldi M."/>
            <person name="Georgii-Hemming P."/>
            <person name="Gingeras T.R."/>
            <person name="Gojobori T."/>
            <person name="Green R.E."/>
            <person name="Gustincich S."/>
            <person name="Harbers M."/>
            <person name="Hayashi Y."/>
            <person name="Hensch T.K."/>
            <person name="Hirokawa N."/>
            <person name="Hill D."/>
            <person name="Huminiecki L."/>
            <person name="Iacono M."/>
            <person name="Ikeo K."/>
            <person name="Iwama A."/>
            <person name="Ishikawa T."/>
            <person name="Jakt M."/>
            <person name="Kanapin A."/>
            <person name="Katoh M."/>
            <person name="Kawasawa Y."/>
            <person name="Kelso J."/>
            <person name="Kitamura H."/>
            <person name="Kitano H."/>
            <person name="Kollias G."/>
            <person name="Krishnan S.P."/>
            <person name="Kruger A."/>
            <person name="Kummerfeld S.K."/>
            <person name="Kurochkin I.V."/>
            <person name="Lareau L.F."/>
            <person name="Lazarevic D."/>
            <person name="Lipovich L."/>
            <person name="Liu J."/>
            <person name="Liuni S."/>
            <person name="McWilliam S."/>
            <person name="Madan Babu M."/>
            <person name="Madera M."/>
            <person name="Marchionni L."/>
            <person name="Matsuda H."/>
            <person name="Matsuzawa S."/>
            <person name="Miki H."/>
            <person name="Mignone F."/>
            <person name="Miyake S."/>
            <person name="Morris K."/>
            <person name="Mottagui-Tabar S."/>
            <person name="Mulder N."/>
            <person name="Nakano N."/>
            <person name="Nakauchi H."/>
            <person name="Ng P."/>
            <person name="Nilsson R."/>
            <person name="Nishiguchi S."/>
            <person name="Nishikawa S."/>
            <person name="Nori F."/>
            <person name="Ohara O."/>
            <person name="Okazaki Y."/>
            <person name="Orlando V."/>
            <person name="Pang K.C."/>
            <person name="Pavan W.J."/>
            <person name="Pavesi G."/>
            <person name="Pesole G."/>
            <person name="Petrovsky N."/>
            <person name="Piazza S."/>
            <person name="Reed J."/>
            <person name="Reid J.F."/>
            <person name="Ring B.Z."/>
            <person name="Ringwald M."/>
            <person name="Rost B."/>
            <person name="Ruan Y."/>
            <person name="Salzberg S.L."/>
            <person name="Sandelin A."/>
            <person name="Schneider C."/>
            <person name="Schoenbach C."/>
            <person name="Sekiguchi K."/>
            <person name="Semple C.A."/>
            <person name="Seno S."/>
            <person name="Sessa L."/>
            <person name="Sheng Y."/>
            <person name="Shibata Y."/>
            <person name="Shimada H."/>
            <person name="Shimada K."/>
            <person name="Silva D."/>
            <person name="Sinclair B."/>
            <person name="Sperling S."/>
            <person name="Stupka E."/>
            <person name="Sugiura K."/>
            <person name="Sultana R."/>
            <person name="Takenaka Y."/>
            <person name="Taki K."/>
            <person name="Tammoja K."/>
            <person name="Tan S.L."/>
            <person name="Tang S."/>
            <person name="Taylor M.S."/>
            <person name="Tegner J."/>
            <person name="Teichmann S.A."/>
            <person name="Ueda H.R."/>
            <person name="van Nimwegen E."/>
            <person name="Verardo R."/>
            <person name="Wei C.L."/>
            <person name="Yagi K."/>
            <person name="Yamanishi H."/>
            <person name="Zabarovsky E."/>
            <person name="Zhu S."/>
            <person name="Zimmer A."/>
            <person name="Hide W."/>
            <person name="Bult C."/>
            <person name="Grimmond S.M."/>
            <person name="Teasdale R.D."/>
            <person name="Liu E.T."/>
            <person name="Brusic V."/>
            <person name="Quackenbush J."/>
            <person name="Wahlestedt C."/>
            <person name="Mattick J.S."/>
            <person name="Hume D.A."/>
            <person name="Kai C."/>
            <person name="Sasaki D."/>
            <person name="Tomaru Y."/>
            <person name="Fukuda S."/>
            <person name="Kanamori-Katayama M."/>
            <person name="Suzuki M."/>
            <person name="Aoki J."/>
            <person name="Arakawa T."/>
            <person name="Iida J."/>
            <person name="Imamura K."/>
            <person name="Itoh M."/>
            <person name="Kato T."/>
            <person name="Kawaji H."/>
            <person name="Kawagashira N."/>
            <person name="Kawashima T."/>
            <person name="Kojima M."/>
            <person name="Kondo S."/>
            <person name="Konno H."/>
            <person name="Nakano K."/>
            <person name="Ninomiya N."/>
            <person name="Nishio T."/>
            <person name="Okada M."/>
            <person name="Plessy C."/>
            <person name="Shibata K."/>
            <person name="Shiraki T."/>
            <person name="Suzuki S."/>
            <person name="Tagami M."/>
            <person name="Waki K."/>
            <person name="Watahiki A."/>
            <person name="Okamura-Oho Y."/>
            <person name="Suzuki H."/>
            <person name="Kawai J."/>
            <person name="Hayashizaki Y."/>
        </authorList>
    </citation>
    <scope>NUCLEOTIDE SEQUENCE [LARGE SCALE MRNA]</scope>
    <source>
        <strain>NOD</strain>
        <tissue>Embryo</tissue>
        <tissue>Thymus</tissue>
    </source>
</reference>
<reference key="2">
    <citation type="journal article" date="2004" name="Genome Res.">
        <title>The status, quality, and expansion of the NIH full-length cDNA project: the Mammalian Gene Collection (MGC).</title>
        <authorList>
            <consortium name="The MGC Project Team"/>
        </authorList>
    </citation>
    <scope>NUCLEOTIDE SEQUENCE [LARGE SCALE MRNA] OF 86-475</scope>
    <source>
        <strain>FVB/N</strain>
        <tissue>Mammary gland</tissue>
    </source>
</reference>
<organism>
    <name type="scientific">Mus musculus</name>
    <name type="common">Mouse</name>
    <dbReference type="NCBI Taxonomy" id="10090"/>
    <lineage>
        <taxon>Eukaryota</taxon>
        <taxon>Metazoa</taxon>
        <taxon>Chordata</taxon>
        <taxon>Craniata</taxon>
        <taxon>Vertebrata</taxon>
        <taxon>Euteleostomi</taxon>
        <taxon>Mammalia</taxon>
        <taxon>Eutheria</taxon>
        <taxon>Euarchontoglires</taxon>
        <taxon>Glires</taxon>
        <taxon>Rodentia</taxon>
        <taxon>Myomorpha</taxon>
        <taxon>Muroidea</taxon>
        <taxon>Muridae</taxon>
        <taxon>Murinae</taxon>
        <taxon>Mus</taxon>
        <taxon>Mus</taxon>
    </lineage>
</organism>
<name>DUS1L_MOUSE</name>
<accession>Q8C2P3</accession>
<accession>Q8VCN7</accession>
<accession>Q9D124</accession>
<feature type="chain" id="PRO_0000247227" description="tRNA-dihydrouridine(16/17) synthase [NAD(P)(+)]-like">
    <location>
        <begin position="1"/>
        <end position="475"/>
    </location>
</feature>
<feature type="region of interest" description="Disordered" evidence="4">
    <location>
        <begin position="343"/>
        <end position="388"/>
    </location>
</feature>
<feature type="compositionally biased region" description="Basic residues" evidence="4">
    <location>
        <begin position="373"/>
        <end position="383"/>
    </location>
</feature>
<feature type="active site" description="Proton donor" evidence="2">
    <location>
        <position position="108"/>
    </location>
</feature>
<feature type="binding site" evidence="2">
    <location>
        <begin position="23"/>
        <end position="25"/>
    </location>
    <ligand>
        <name>FMN</name>
        <dbReference type="ChEBI" id="CHEBI:58210"/>
    </ligand>
</feature>
<feature type="binding site" evidence="2">
    <location>
        <position position="79"/>
    </location>
    <ligand>
        <name>FMN</name>
        <dbReference type="ChEBI" id="CHEBI:58210"/>
    </ligand>
</feature>
<feature type="binding site" evidence="2">
    <location>
        <position position="147"/>
    </location>
    <ligand>
        <name>FMN</name>
        <dbReference type="ChEBI" id="CHEBI:58210"/>
    </ligand>
</feature>
<feature type="binding site" evidence="2">
    <location>
        <position position="175"/>
    </location>
    <ligand>
        <name>FMN</name>
        <dbReference type="ChEBI" id="CHEBI:58210"/>
    </ligand>
</feature>
<feature type="binding site" evidence="2">
    <location>
        <begin position="208"/>
        <end position="210"/>
    </location>
    <ligand>
        <name>FMN</name>
        <dbReference type="ChEBI" id="CHEBI:58210"/>
    </ligand>
</feature>
<feature type="binding site" evidence="2">
    <location>
        <begin position="232"/>
        <end position="233"/>
    </location>
    <ligand>
        <name>FMN</name>
        <dbReference type="ChEBI" id="CHEBI:58210"/>
    </ligand>
</feature>
<feature type="sequence conflict" description="In Ref. 1; BAB23138." evidence="5" ref="1">
    <original>EG</original>
    <variation>DD</variation>
    <location>
        <begin position="243"/>
        <end position="244"/>
    </location>
</feature>
<evidence type="ECO:0000250" key="1">
    <source>
        <dbReference type="UniProtKB" id="P53759"/>
    </source>
</evidence>
<evidence type="ECO:0000250" key="2">
    <source>
        <dbReference type="UniProtKB" id="Q5SMC7"/>
    </source>
</evidence>
<evidence type="ECO:0000250" key="3">
    <source>
        <dbReference type="UniProtKB" id="Q6P1R4"/>
    </source>
</evidence>
<evidence type="ECO:0000256" key="4">
    <source>
        <dbReference type="SAM" id="MobiDB-lite"/>
    </source>
</evidence>
<evidence type="ECO:0000305" key="5"/>
<sequence>MPKLQGFEFWSRTLGGARHVVAPMVDQSELAWRLLSRRHGAQLCYTPMLHAQVFVRDANYRKENLYCDVCPEDRPLIVQFCANDPEVFVQAALLAQDYCDAIDLNLGCPQMIAKRGHYGAFLQEEWDLLQRMILLAHERLSVPVTCKIRVFPEIDKTVRYAQMLEKAGCQLLTVHGRTKEQKGPMAGTASWEHIKAVRKAVGIPVFANGNIQCLQDVERCIQDTGVQGVMSAEGNLHNPALFEGRSPAVWELAEEYLDIVRQHPCPLSYVRAHLFKLWHHTLQVHQQLREELAKVKTLEGVAAVSQALKLRCQEDMSRQQEGVRPADNLPAFHWICQPYIRPGPREGSKENSGGRSKRALEEEEGSMEGLSKNKLKKQLRNPHKTFDPSLKPKYAKCDQCGNPKGNRCVFNLCRGCCKKRAFRETADCPGHGLLFKTKLEKSLAWKGTQPGLQEAQQVRPVTPSGFSEVVGSALA</sequence>